<organism>
    <name type="scientific">Danio rerio</name>
    <name type="common">Zebrafish</name>
    <name type="synonym">Brachydanio rerio</name>
    <dbReference type="NCBI Taxonomy" id="7955"/>
    <lineage>
        <taxon>Eukaryota</taxon>
        <taxon>Metazoa</taxon>
        <taxon>Chordata</taxon>
        <taxon>Craniata</taxon>
        <taxon>Vertebrata</taxon>
        <taxon>Euteleostomi</taxon>
        <taxon>Actinopterygii</taxon>
        <taxon>Neopterygii</taxon>
        <taxon>Teleostei</taxon>
        <taxon>Ostariophysi</taxon>
        <taxon>Cypriniformes</taxon>
        <taxon>Danionidae</taxon>
        <taxon>Danioninae</taxon>
        <taxon>Danio</taxon>
    </lineage>
</organism>
<evidence type="ECO:0000250" key="1">
    <source>
        <dbReference type="UniProtKB" id="Q9IBF7"/>
    </source>
</evidence>
<evidence type="ECO:0000255" key="2"/>
<evidence type="ECO:0000255" key="3">
    <source>
        <dbReference type="PROSITE-ProRule" id="PRU00741"/>
    </source>
</evidence>
<evidence type="ECO:0000269" key="4">
    <source>
    </source>
</evidence>
<dbReference type="EMBL" id="AY681353">
    <property type="protein sequence ID" value="AAV91906.1"/>
    <property type="molecule type" value="mRNA"/>
</dbReference>
<dbReference type="EMBL" id="BC076449">
    <property type="protein sequence ID" value="AAH76449.1"/>
    <property type="molecule type" value="mRNA"/>
</dbReference>
<dbReference type="EMBL" id="BC134025">
    <property type="protein sequence ID" value="AAI34026.1"/>
    <property type="molecule type" value="mRNA"/>
</dbReference>
<dbReference type="RefSeq" id="NP_001038552.1">
    <property type="nucleotide sequence ID" value="NM_001045087.1"/>
</dbReference>
<dbReference type="SMR" id="Q0VIL3"/>
<dbReference type="STRING" id="7955.ENSDARP00000106982"/>
<dbReference type="MEROPS" id="S60.976"/>
<dbReference type="PaxDb" id="7955-ENSDARP00000106982"/>
<dbReference type="Ensembl" id="ENSDART00000130830">
    <property type="protein sequence ID" value="ENSDARP00000106982"/>
    <property type="gene ID" value="ENSDARG00000040306"/>
</dbReference>
<dbReference type="GeneID" id="565818"/>
<dbReference type="KEGG" id="dre:565818"/>
<dbReference type="AGR" id="ZFIN:ZDB-GENE-040709-1"/>
<dbReference type="CTD" id="565818"/>
<dbReference type="ZFIN" id="ZDB-GENE-040709-1">
    <property type="gene designation" value="otomp"/>
</dbReference>
<dbReference type="eggNOG" id="ENOG502QUF9">
    <property type="taxonomic scope" value="Eukaryota"/>
</dbReference>
<dbReference type="InParanoid" id="Q0VIL3"/>
<dbReference type="OMA" id="ACIGDDN"/>
<dbReference type="OrthoDB" id="9981115at2759"/>
<dbReference type="PhylomeDB" id="Q0VIL3"/>
<dbReference type="PRO" id="PR:Q0VIL3"/>
<dbReference type="Proteomes" id="UP000000437">
    <property type="component" value="Chromosome 2"/>
</dbReference>
<dbReference type="Bgee" id="ENSDARG00000040306">
    <property type="expression patterns" value="Expressed in dorsal plus ventral thalamus and 26 other cell types or tissues"/>
</dbReference>
<dbReference type="ExpressionAtlas" id="Q0VIL3">
    <property type="expression patterns" value="baseline"/>
</dbReference>
<dbReference type="GO" id="GO:0005769">
    <property type="term" value="C:early endosome"/>
    <property type="evidence" value="ECO:0000318"/>
    <property type="project" value="GO_Central"/>
</dbReference>
<dbReference type="GO" id="GO:0005615">
    <property type="term" value="C:extracellular space"/>
    <property type="evidence" value="ECO:0000318"/>
    <property type="project" value="GO_Central"/>
</dbReference>
<dbReference type="GO" id="GO:0005886">
    <property type="term" value="C:plasma membrane"/>
    <property type="evidence" value="ECO:0000318"/>
    <property type="project" value="GO_Central"/>
</dbReference>
<dbReference type="GO" id="GO:0055037">
    <property type="term" value="C:recycling endosome"/>
    <property type="evidence" value="ECO:0000318"/>
    <property type="project" value="GO_Central"/>
</dbReference>
<dbReference type="GO" id="GO:0006826">
    <property type="term" value="P:iron ion transport"/>
    <property type="evidence" value="ECO:0000318"/>
    <property type="project" value="GO_Central"/>
</dbReference>
<dbReference type="GO" id="GO:0048840">
    <property type="term" value="P:otolith development"/>
    <property type="evidence" value="ECO:0000315"/>
    <property type="project" value="ZFIN"/>
</dbReference>
<dbReference type="CDD" id="cd13529">
    <property type="entry name" value="PBP2_transferrin"/>
    <property type="match status" value="1"/>
</dbReference>
<dbReference type="FunFam" id="3.40.190.10:FF:000095">
    <property type="entry name" value="Lactotransferrin"/>
    <property type="match status" value="1"/>
</dbReference>
<dbReference type="Gene3D" id="3.40.190.10">
    <property type="entry name" value="Periplasmic binding protein-like II"/>
    <property type="match status" value="2"/>
</dbReference>
<dbReference type="InterPro" id="IPR001156">
    <property type="entry name" value="Transferrin-like_dom"/>
</dbReference>
<dbReference type="PANTHER" id="PTHR11485:SF49">
    <property type="entry name" value="OTOLITH MATRIX PROTEIN 1"/>
    <property type="match status" value="1"/>
</dbReference>
<dbReference type="PANTHER" id="PTHR11485">
    <property type="entry name" value="TRANSFERRIN"/>
    <property type="match status" value="1"/>
</dbReference>
<dbReference type="Pfam" id="PF00405">
    <property type="entry name" value="Transferrin"/>
    <property type="match status" value="1"/>
</dbReference>
<dbReference type="PRINTS" id="PR00422">
    <property type="entry name" value="TRANSFERRIN"/>
</dbReference>
<dbReference type="SMART" id="SM00094">
    <property type="entry name" value="TR_FER"/>
    <property type="match status" value="1"/>
</dbReference>
<dbReference type="SUPFAM" id="SSF53850">
    <property type="entry name" value="Periplasmic binding protein-like II"/>
    <property type="match status" value="1"/>
</dbReference>
<dbReference type="PROSITE" id="PS51408">
    <property type="entry name" value="TRANSFERRIN_LIKE_4"/>
    <property type="match status" value="1"/>
</dbReference>
<gene>
    <name type="primary">otomp</name>
    <name type="synonym">omp1</name>
</gene>
<keyword id="KW-1185">Reference proteome</keyword>
<keyword id="KW-0964">Secreted</keyword>
<keyword id="KW-0732">Signal</keyword>
<sequence length="371" mass="40776">MDLPGGHLAVVLFLFVLVSMSTENNIIRWCTVSDAEDQKCLDLAGNATARNLRGQLVCVRGQSPTDCMKQIKNGTADASTMYADEIYTAGFCYGLDVAVGESYNGVDGINYYVVALARTSSSDLSLLEMHERSSCHPGMRTTVGWTVPIGFLVNTSQISVDVQCNFPHAVGDFFGYSCVPGVKDPEHDPKGNNPRNLCEACIGDENDRHICANNPRERHFGEAGALRCVAENLGDVAFVKHTTVFDNMQGKNQESWALDLELEDLKLLCPDGSEANLFQHESCHLAVVPTNAVVVRLEDKCRVYKFLERVQNAFGNTTEGFSLFSSVNYGQPDVLFSDSTKKLLRVMGTYTSWLGPSYTTILRAFECEGLC</sequence>
<reference key="1">
    <citation type="submission" date="2004-07" db="EMBL/GenBank/DDBJ databases">
        <title>A comparison of otolith proteins in euteleostei.</title>
        <authorList>
            <person name="Kollmar R."/>
            <person name="Stevenson A."/>
            <person name="Kang Y.-J."/>
            <person name="Jiang Z.Y."/>
        </authorList>
    </citation>
    <scope>NUCLEOTIDE SEQUENCE [MRNA]</scope>
</reference>
<reference key="2">
    <citation type="submission" date="2007-03" db="EMBL/GenBank/DDBJ databases">
        <authorList>
            <consortium name="NIH - Zebrafish Gene Collection (ZGC) project"/>
        </authorList>
    </citation>
    <scope>NUCLEOTIDE SEQUENCE [LARGE SCALE MRNA]</scope>
    <source>
        <tissue>Embryo</tissue>
    </source>
</reference>
<reference key="3">
    <citation type="journal article" date="2005" name="Mech. Dev.">
        <title>Otolith matrix proteins OMP-1 and Otolin-1 are necessary for normal otolith growth and their correct anchoring onto the sensory maculae.</title>
        <authorList>
            <person name="Murayama E."/>
            <person name="Herbomel P."/>
            <person name="Kawakami A."/>
            <person name="Takeda H."/>
            <person name="Nagasawa H."/>
        </authorList>
    </citation>
    <scope>FUNCTION</scope>
</reference>
<feature type="signal peptide" evidence="2">
    <location>
        <begin position="1"/>
        <end position="21"/>
    </location>
</feature>
<feature type="chain" id="PRO_0000332930" description="Otolith matrix protein 1">
    <location>
        <begin position="22"/>
        <end position="371"/>
    </location>
</feature>
<feature type="domain" description="Transferrin-like" evidence="3">
    <location>
        <begin position="27"/>
        <end position="367"/>
    </location>
</feature>
<proteinExistence type="evidence at transcript level"/>
<comment type="function">
    <text evidence="4">Required for normal otolith growth and deposition of otolin-1 in the otolith.</text>
</comment>
<comment type="subunit">
    <text evidence="1">Interacts with OTOL1.</text>
</comment>
<comment type="subcellular location">
    <subcellularLocation>
        <location evidence="1">Secreted</location>
    </subcellularLocation>
</comment>
<accession>Q0VIL3</accession>
<accession>Q6DGA2</accession>
<protein>
    <recommendedName>
        <fullName>Otolith matrix protein 1</fullName>
        <shortName>OMP-1</shortName>
    </recommendedName>
</protein>
<name>OTOMP_DANRE</name>